<accession>A8MA91</accession>
<sequence>MNDVDASIEPKRIKEVRAYVVKGGGADYHDQSSEHWILGYIATPISIYPEYRASRASWGLNVLGSVVVEVESSDGEVGFGISTGGYPAAWIIENHLSRFVVGKYVGEVEKTWDQMFKATIYYGRRGIVMNAISAVDLALWDLMGKVRGLPVYDLLGGPVRDELTFYATGPRPDVAKSLGFIGGKLPLIHGPADGIEGLRENVRIFKEAREKVGDDFLLMYDCWMSLDLPYAQRLLSELKPYGLFWIEEPFIPDDYWSFGALANIAPPTLVASGEHESTVHGFRLLLELGKVNVIQPDVTWVGGVTPMIKIAALAEAYGAWVIPHGSSVYGYHFIITRVNSPFAEYLVVSPDATKIVPQFHPLLRDEPIPQNGKVRLSRKPGFGVELNRDLLVRPFKST</sequence>
<proteinExistence type="inferred from homology"/>
<dbReference type="EC" id="4.2.1.90" evidence="1"/>
<dbReference type="EMBL" id="CP000852">
    <property type="protein sequence ID" value="ABW01023.1"/>
    <property type="molecule type" value="Genomic_DNA"/>
</dbReference>
<dbReference type="RefSeq" id="WP_012185243.1">
    <property type="nucleotide sequence ID" value="NC_009954.1"/>
</dbReference>
<dbReference type="SMR" id="A8MA91"/>
<dbReference type="STRING" id="397948.Cmaq_0174"/>
<dbReference type="GeneID" id="5708576"/>
<dbReference type="KEGG" id="cma:Cmaq_0174"/>
<dbReference type="eggNOG" id="arCOG01168">
    <property type="taxonomic scope" value="Archaea"/>
</dbReference>
<dbReference type="HOGENOM" id="CLU_030273_1_0_2"/>
<dbReference type="OrthoDB" id="23952at2157"/>
<dbReference type="Proteomes" id="UP000001137">
    <property type="component" value="Chromosome"/>
</dbReference>
<dbReference type="GO" id="GO:0050032">
    <property type="term" value="F:L-rhamnonate dehydratase activity"/>
    <property type="evidence" value="ECO:0007669"/>
    <property type="project" value="UniProtKB-UniRule"/>
</dbReference>
<dbReference type="GO" id="GO:0000287">
    <property type="term" value="F:magnesium ion binding"/>
    <property type="evidence" value="ECO:0007669"/>
    <property type="project" value="UniProtKB-UniRule"/>
</dbReference>
<dbReference type="GO" id="GO:0009063">
    <property type="term" value="P:amino acid catabolic process"/>
    <property type="evidence" value="ECO:0007669"/>
    <property type="project" value="InterPro"/>
</dbReference>
<dbReference type="GO" id="GO:0016052">
    <property type="term" value="P:carbohydrate catabolic process"/>
    <property type="evidence" value="ECO:0007669"/>
    <property type="project" value="TreeGrafter"/>
</dbReference>
<dbReference type="FunFam" id="3.20.20.120:FF:000005">
    <property type="entry name" value="Putative L-rhamnonate dehydratase"/>
    <property type="match status" value="1"/>
</dbReference>
<dbReference type="Gene3D" id="3.20.20.120">
    <property type="entry name" value="Enolase-like C-terminal domain"/>
    <property type="match status" value="1"/>
</dbReference>
<dbReference type="Gene3D" id="3.30.390.10">
    <property type="entry name" value="Enolase-like, N-terminal domain"/>
    <property type="match status" value="1"/>
</dbReference>
<dbReference type="HAMAP" id="MF_01288">
    <property type="entry name" value="Rhamnon_dehydrat"/>
    <property type="match status" value="1"/>
</dbReference>
<dbReference type="InterPro" id="IPR036849">
    <property type="entry name" value="Enolase-like_C_sf"/>
</dbReference>
<dbReference type="InterPro" id="IPR029017">
    <property type="entry name" value="Enolase-like_N"/>
</dbReference>
<dbReference type="InterPro" id="IPR029065">
    <property type="entry name" value="Enolase_C-like"/>
</dbReference>
<dbReference type="InterPro" id="IPR023444">
    <property type="entry name" value="L-Rhamnon_dehydrat"/>
</dbReference>
<dbReference type="InterPro" id="IPR018110">
    <property type="entry name" value="Mandel_Rmase/mucon_lact_enz_CS"/>
</dbReference>
<dbReference type="InterPro" id="IPR013342">
    <property type="entry name" value="Mandelate_racemase_C"/>
</dbReference>
<dbReference type="InterPro" id="IPR013341">
    <property type="entry name" value="Mandelate_racemase_N_dom"/>
</dbReference>
<dbReference type="InterPro" id="IPR046945">
    <property type="entry name" value="RHMD-like"/>
</dbReference>
<dbReference type="NCBIfam" id="NF011968">
    <property type="entry name" value="PRK15440.1"/>
    <property type="match status" value="1"/>
</dbReference>
<dbReference type="PANTHER" id="PTHR13794">
    <property type="entry name" value="ENOLASE SUPERFAMILY, MANDELATE RACEMASE"/>
    <property type="match status" value="1"/>
</dbReference>
<dbReference type="PANTHER" id="PTHR13794:SF58">
    <property type="entry name" value="MITOCHONDRIAL ENOLASE SUPERFAMILY MEMBER 1"/>
    <property type="match status" value="1"/>
</dbReference>
<dbReference type="Pfam" id="PF13378">
    <property type="entry name" value="MR_MLE_C"/>
    <property type="match status" value="1"/>
</dbReference>
<dbReference type="Pfam" id="PF02746">
    <property type="entry name" value="MR_MLE_N"/>
    <property type="match status" value="1"/>
</dbReference>
<dbReference type="SFLD" id="SFLDG00179">
    <property type="entry name" value="mandelate_racemase"/>
    <property type="match status" value="1"/>
</dbReference>
<dbReference type="SFLD" id="SFLDF00006">
    <property type="entry name" value="rhamnonate_dehydratase"/>
    <property type="match status" value="1"/>
</dbReference>
<dbReference type="SMART" id="SM00922">
    <property type="entry name" value="MR_MLE"/>
    <property type="match status" value="1"/>
</dbReference>
<dbReference type="SUPFAM" id="SSF51604">
    <property type="entry name" value="Enolase C-terminal domain-like"/>
    <property type="match status" value="1"/>
</dbReference>
<dbReference type="SUPFAM" id="SSF54826">
    <property type="entry name" value="Enolase N-terminal domain-like"/>
    <property type="match status" value="1"/>
</dbReference>
<dbReference type="PROSITE" id="PS00908">
    <property type="entry name" value="MR_MLE_1"/>
    <property type="match status" value="1"/>
</dbReference>
<comment type="function">
    <text evidence="1">Catalyzes the dehydration of L-rhamnonate to 2-keto-3-deoxy-L-rhamnonate (KDR).</text>
</comment>
<comment type="catalytic activity">
    <reaction evidence="1">
        <text>L-rhamnonate = 2-dehydro-3-deoxy-L-rhamnonate + H2O</text>
        <dbReference type="Rhea" id="RHEA:23080"/>
        <dbReference type="ChEBI" id="CHEBI:15377"/>
        <dbReference type="ChEBI" id="CHEBI:58118"/>
        <dbReference type="ChEBI" id="CHEBI:58371"/>
        <dbReference type="EC" id="4.2.1.90"/>
    </reaction>
</comment>
<comment type="cofactor">
    <cofactor evidence="1">
        <name>Mg(2+)</name>
        <dbReference type="ChEBI" id="CHEBI:18420"/>
    </cofactor>
    <text evidence="1">Binds 1 Mg(2+) ion per subunit.</text>
</comment>
<comment type="miscellaneous">
    <text evidence="1">Reaction proceeds via a syn dehydration.</text>
</comment>
<comment type="similarity">
    <text evidence="1">Belongs to the mandelate racemase/muconate lactonizing enzyme family. RhamD subfamily.</text>
</comment>
<organism>
    <name type="scientific">Caldivirga maquilingensis (strain ATCC 700844 / DSM 13496 / JCM 10307 / IC-167)</name>
    <dbReference type="NCBI Taxonomy" id="397948"/>
    <lineage>
        <taxon>Archaea</taxon>
        <taxon>Thermoproteota</taxon>
        <taxon>Thermoprotei</taxon>
        <taxon>Thermoproteales</taxon>
        <taxon>Thermoproteaceae</taxon>
        <taxon>Caldivirga</taxon>
    </lineage>
</organism>
<reference key="1">
    <citation type="submission" date="2007-10" db="EMBL/GenBank/DDBJ databases">
        <title>Complete sequence of Caldivirga maquilingensis IC-167.</title>
        <authorList>
            <consortium name="US DOE Joint Genome Institute"/>
            <person name="Copeland A."/>
            <person name="Lucas S."/>
            <person name="Lapidus A."/>
            <person name="Barry K."/>
            <person name="Glavina del Rio T."/>
            <person name="Dalin E."/>
            <person name="Tice H."/>
            <person name="Pitluck S."/>
            <person name="Saunders E."/>
            <person name="Brettin T."/>
            <person name="Bruce D."/>
            <person name="Detter J.C."/>
            <person name="Han C."/>
            <person name="Schmutz J."/>
            <person name="Larimer F."/>
            <person name="Land M."/>
            <person name="Hauser L."/>
            <person name="Kyrpides N."/>
            <person name="Ivanova N."/>
            <person name="Biddle J.F."/>
            <person name="Zhang Z."/>
            <person name="Fitz-Gibbon S.T."/>
            <person name="Lowe T.M."/>
            <person name="Saltikov C."/>
            <person name="House C.H."/>
            <person name="Richardson P."/>
        </authorList>
    </citation>
    <scope>NUCLEOTIDE SEQUENCE [LARGE SCALE GENOMIC DNA]</scope>
    <source>
        <strain>ATCC 700844 / DSM 13496 / JCM 10307 / IC-167</strain>
    </source>
</reference>
<evidence type="ECO:0000255" key="1">
    <source>
        <dbReference type="HAMAP-Rule" id="MF_01288"/>
    </source>
</evidence>
<gene>
    <name evidence="1" type="primary">rhmD</name>
    <name type="ordered locus">Cmaq_0174</name>
</gene>
<keyword id="KW-0456">Lyase</keyword>
<keyword id="KW-0460">Magnesium</keyword>
<keyword id="KW-0479">Metal-binding</keyword>
<keyword id="KW-1185">Reference proteome</keyword>
<name>RHMD_CALMQ</name>
<feature type="chain" id="PRO_0000351711" description="Putative L-rhamnonate dehydratase">
    <location>
        <begin position="1"/>
        <end position="398"/>
    </location>
</feature>
<feature type="active site" description="Proton acceptor" evidence="1">
    <location>
        <position position="324"/>
    </location>
</feature>
<feature type="binding site" evidence="1">
    <location>
        <position position="29"/>
    </location>
    <ligand>
        <name>substrate</name>
    </ligand>
</feature>
<feature type="binding site" evidence="1">
    <location>
        <position position="55"/>
    </location>
    <ligand>
        <name>substrate</name>
    </ligand>
</feature>
<feature type="binding site" evidence="1">
    <location>
        <position position="221"/>
    </location>
    <ligand>
        <name>Mg(2+)</name>
        <dbReference type="ChEBI" id="CHEBI:18420"/>
    </ligand>
</feature>
<feature type="binding site" evidence="1">
    <location>
        <position position="247"/>
    </location>
    <ligand>
        <name>Mg(2+)</name>
        <dbReference type="ChEBI" id="CHEBI:18420"/>
    </ligand>
</feature>
<feature type="binding site" evidence="1">
    <location>
        <position position="274"/>
    </location>
    <ligand>
        <name>Mg(2+)</name>
        <dbReference type="ChEBI" id="CHEBI:18420"/>
    </ligand>
</feature>
<feature type="binding site" evidence="1">
    <location>
        <position position="344"/>
    </location>
    <ligand>
        <name>substrate</name>
    </ligand>
</feature>
<feature type="site" description="Increases basicity of active site His" evidence="1">
    <location>
        <position position="297"/>
    </location>
</feature>
<feature type="site" description="Transition state stabilizer" evidence="1">
    <location>
        <position position="344"/>
    </location>
</feature>
<protein>
    <recommendedName>
        <fullName evidence="1">Putative L-rhamnonate dehydratase</fullName>
        <shortName evidence="1">RhamD</shortName>
        <ecNumber evidence="1">4.2.1.90</ecNumber>
    </recommendedName>
</protein>